<evidence type="ECO:0000255" key="1">
    <source>
        <dbReference type="PROSITE-ProRule" id="PRU00981"/>
    </source>
</evidence>
<evidence type="ECO:0000256" key="2">
    <source>
        <dbReference type="SAM" id="MobiDB-lite"/>
    </source>
</evidence>
<evidence type="ECO:0000269" key="3">
    <source>
    </source>
</evidence>
<evidence type="ECO:0000269" key="4">
    <source>
    </source>
</evidence>
<evidence type="ECO:0000269" key="5">
    <source>
    </source>
</evidence>
<evidence type="ECO:0000303" key="6">
    <source>
    </source>
</evidence>
<evidence type="ECO:0000303" key="7">
    <source>
    </source>
</evidence>
<evidence type="ECO:0000305" key="8"/>
<reference key="1">
    <citation type="journal article" date="1995" name="Cell">
        <title>An amino-terminal domain of Mxi1 mediates anti-Myc oncogenic activity and interacts with a homolog of the yeast transcriptional repressor SIN3.</title>
        <authorList>
            <person name="Schreiber-Agus N."/>
            <person name="Chin L."/>
            <person name="Chen K."/>
            <person name="Torres R."/>
            <person name="Rao G."/>
            <person name="Guida P."/>
            <person name="Skoultchi A.I."/>
            <person name="DePinho R.A."/>
        </authorList>
    </citation>
    <scope>NUCLEOTIDE SEQUENCE [MRNA] (ISOFORMS LONG AND SHORT)</scope>
</reference>
<reference key="2">
    <citation type="journal article" date="1994" name="Cell">
        <title>Mxi1, a protein that specifically interacts with Max to bind Myc-Max recognition sites.</title>
        <authorList>
            <person name="Zervos A.S."/>
            <person name="Gyuris J."/>
            <person name="Brent R."/>
        </authorList>
    </citation>
    <scope>NUCLEOTIDE SEQUENCE [MRNA] (ISOFORMS LONG AND SHORT)</scope>
</reference>
<reference key="3">
    <citation type="journal article" date="1995" name="Gene">
        <title>Cloning and sequencing of the murine Mxi1 cDNA.</title>
        <authorList>
            <person name="Shimizu E."/>
            <person name="Shirasawa H."/>
            <person name="Kodama K."/>
            <person name="Koseki K."/>
            <person name="Sato T."/>
            <person name="Simizu B."/>
        </authorList>
    </citation>
    <scope>NUCLEOTIDE SEQUENCE [MRNA]</scope>
    <source>
        <strain>C3H/HeJ</strain>
    </source>
</reference>
<reference key="4">
    <citation type="journal article" date="1995" name="EMBO J.">
        <title>Mad3 and Mad4: novel Max-interacting transcriptional repressors that suppress c-myc dependent transformation and are expressed during neural and epidermal differentiation.</title>
        <authorList>
            <person name="Hurlin P.J."/>
            <person name="Queva C."/>
            <person name="Koskinen P.J."/>
            <person name="Steingrimsson E."/>
            <person name="Ayer D.E."/>
            <person name="Copeland N.G."/>
            <person name="Jenkins N.A."/>
            <person name="Eisenman R.N."/>
        </authorList>
    </citation>
    <scope>DEVELOPMENTAL STAGE</scope>
</reference>
<reference key="5">
    <citation type="journal article" date="1996" name="EMBO J.">
        <authorList>
            <person name="Hurlin P.J."/>
            <person name="Queva C."/>
            <person name="Koskinen P.J."/>
            <person name="Steingrimsson E."/>
            <person name="Ayer D.E."/>
            <person name="Copeland N.G."/>
            <person name="Jenkins N.A."/>
            <person name="Eisenman R.N."/>
        </authorList>
    </citation>
    <scope>ERRATUM OF PUBMED:8521822</scope>
</reference>
<reference key="6">
    <citation type="journal article" date="1998" name="Oncogene">
        <title>Mmip1: a novel leucine zipper protein that reverses the suppressive effects of mad family members on C-myc.</title>
        <authorList>
            <person name="Gupta K."/>
            <person name="Anand G."/>
            <person name="Yin X.Y."/>
            <person name="Prochownik E.V."/>
        </authorList>
    </citation>
    <scope>INTERACTION WITH SMC3</scope>
</reference>
<reference key="7">
    <citation type="journal article" date="1999" name="Oncogene">
        <title>Mmip-2, a novel RING finger protein that interacts with mad members of the Myc oncoprotein network.</title>
        <authorList>
            <person name="Yin X.-Y."/>
            <person name="Gupta K."/>
            <person name="Prochownik E.V."/>
        </authorList>
    </citation>
    <scope>INTERACTION WITH RNF17</scope>
</reference>
<protein>
    <recommendedName>
        <fullName>Max-interacting protein 1</fullName>
        <shortName>Max interactor 1</shortName>
    </recommendedName>
</protein>
<feature type="chain" id="PRO_0000127286" description="Max-interacting protein 1">
    <location>
        <begin position="1"/>
        <end position="228"/>
    </location>
</feature>
<feature type="domain" description="bHLH" evidence="1">
    <location>
        <begin position="67"/>
        <end position="119"/>
    </location>
</feature>
<feature type="region of interest" description="Disordered" evidence="2">
    <location>
        <begin position="30"/>
        <end position="76"/>
    </location>
</feature>
<feature type="region of interest" description="Disordered" evidence="2">
    <location>
        <begin position="160"/>
        <end position="228"/>
    </location>
</feature>
<feature type="compositionally biased region" description="Basic residues" evidence="2">
    <location>
        <begin position="43"/>
        <end position="56"/>
    </location>
</feature>
<feature type="compositionally biased region" description="Polar residues" evidence="2">
    <location>
        <begin position="57"/>
        <end position="70"/>
    </location>
</feature>
<feature type="compositionally biased region" description="Acidic residues" evidence="2">
    <location>
        <begin position="173"/>
        <end position="183"/>
    </location>
</feature>
<feature type="compositionally biased region" description="Polar residues" evidence="2">
    <location>
        <begin position="207"/>
        <end position="228"/>
    </location>
</feature>
<feature type="splice variant" id="VSP_002141" description="In isoform Short." evidence="6 7">
    <location>
        <begin position="1"/>
        <end position="36"/>
    </location>
</feature>
<feature type="sequence conflict" description="In Ref. 3." evidence="8" ref="3">
    <original>MERVRMINVQRLLEAAEFLERRERE</original>
    <variation>MEKHINTFLQNVQILLEAASYLEQIEKENKK</variation>
    <location>
        <begin position="1"/>
        <end position="25"/>
    </location>
</feature>
<gene>
    <name type="primary">Mxi1</name>
</gene>
<dbReference type="EMBL" id="L38822">
    <property type="protein sequence ID" value="AAA65684.1"/>
    <property type="molecule type" value="mRNA"/>
</dbReference>
<dbReference type="EMBL" id="L38821">
    <property type="protein sequence ID" value="AAA65685.1"/>
    <property type="molecule type" value="mRNA"/>
</dbReference>
<dbReference type="EMBL" id="U24674">
    <property type="protein sequence ID" value="AAA65183.1"/>
    <property type="molecule type" value="mRNA"/>
</dbReference>
<dbReference type="EMBL" id="U24673">
    <property type="protein sequence ID" value="AAA65182.1"/>
    <property type="molecule type" value="mRNA"/>
</dbReference>
<dbReference type="EMBL" id="D31824">
    <property type="protein sequence ID" value="BAA06612.1"/>
    <property type="molecule type" value="mRNA"/>
</dbReference>
<dbReference type="CCDS" id="CCDS29901.1">
    <molecule id="P50540-1"/>
</dbReference>
<dbReference type="CCDS" id="CCDS38023.1">
    <molecule id="P50540-2"/>
</dbReference>
<dbReference type="PIR" id="A56069">
    <property type="entry name" value="A56069"/>
</dbReference>
<dbReference type="PIR" id="JC4050">
    <property type="entry name" value="JC4050"/>
</dbReference>
<dbReference type="RefSeq" id="NP_001008543.1">
    <molecule id="P50540-2"/>
    <property type="nucleotide sequence ID" value="NM_001008543.3"/>
</dbReference>
<dbReference type="RefSeq" id="NP_001347274.1">
    <molecule id="P50540-2"/>
    <property type="nucleotide sequence ID" value="NM_001360345.1"/>
</dbReference>
<dbReference type="RefSeq" id="NP_001347275.1">
    <molecule id="P50540-2"/>
    <property type="nucleotide sequence ID" value="NM_001360346.1"/>
</dbReference>
<dbReference type="RefSeq" id="NP_001347276.1">
    <molecule id="P50540-2"/>
    <property type="nucleotide sequence ID" value="NM_001360347.1"/>
</dbReference>
<dbReference type="RefSeq" id="NP_034977.1">
    <molecule id="P50540-1"/>
    <property type="nucleotide sequence ID" value="NM_010847.4"/>
</dbReference>
<dbReference type="RefSeq" id="XP_006526801.1">
    <property type="nucleotide sequence ID" value="XM_006526738.1"/>
</dbReference>
<dbReference type="RefSeq" id="XP_006526802.1">
    <molecule id="P50540-2"/>
    <property type="nucleotide sequence ID" value="XM_006526739.2"/>
</dbReference>
<dbReference type="RefSeq" id="XP_006526803.1">
    <property type="nucleotide sequence ID" value="XM_006526740.1"/>
</dbReference>
<dbReference type="RefSeq" id="XP_030106624.1">
    <molecule id="P50540-2"/>
    <property type="nucleotide sequence ID" value="XM_030250764.2"/>
</dbReference>
<dbReference type="RefSeq" id="XP_030106625.1">
    <molecule id="P50540-2"/>
    <property type="nucleotide sequence ID" value="XM_030250765.1"/>
</dbReference>
<dbReference type="SMR" id="P50540"/>
<dbReference type="BioGRID" id="201630">
    <property type="interactions" value="8"/>
</dbReference>
<dbReference type="DIP" id="DIP-489N"/>
<dbReference type="FunCoup" id="P50540">
    <property type="interactions" value="2749"/>
</dbReference>
<dbReference type="IntAct" id="P50540">
    <property type="interactions" value="2"/>
</dbReference>
<dbReference type="STRING" id="10090.ENSMUSP00000003870"/>
<dbReference type="PhosphoSitePlus" id="P50540"/>
<dbReference type="PaxDb" id="10090-ENSMUSP00000003870"/>
<dbReference type="ProteomicsDB" id="287644">
    <molecule id="P50540-1"/>
</dbReference>
<dbReference type="ProteomicsDB" id="287645">
    <molecule id="P50540-2"/>
</dbReference>
<dbReference type="Antibodypedia" id="18346">
    <property type="antibodies" value="250 antibodies from 31 providers"/>
</dbReference>
<dbReference type="DNASU" id="17859"/>
<dbReference type="Ensembl" id="ENSMUST00000025998.15">
    <molecule id="P50540-2"/>
    <property type="protein sequence ID" value="ENSMUSP00000025998.9"/>
    <property type="gene ID" value="ENSMUSG00000025025.15"/>
</dbReference>
<dbReference type="Ensembl" id="ENSMUST00000111737.3">
    <molecule id="P50540-1"/>
    <property type="protein sequence ID" value="ENSMUSP00000107366.3"/>
    <property type="gene ID" value="ENSMUSG00000025025.15"/>
</dbReference>
<dbReference type="Ensembl" id="ENSMUST00000235201.2">
    <molecule id="P50540-2"/>
    <property type="protein sequence ID" value="ENSMUSP00000158401.2"/>
    <property type="gene ID" value="ENSMUSG00000025025.15"/>
</dbReference>
<dbReference type="Ensembl" id="ENSMUST00000235880.2">
    <molecule id="P50540-2"/>
    <property type="protein sequence ID" value="ENSMUSP00000157790.2"/>
    <property type="gene ID" value="ENSMUSG00000025025.15"/>
</dbReference>
<dbReference type="Ensembl" id="ENSMUST00000236973.2">
    <molecule id="P50540-2"/>
    <property type="protein sequence ID" value="ENSMUSP00000157400.2"/>
    <property type="gene ID" value="ENSMUSG00000025025.15"/>
</dbReference>
<dbReference type="GeneID" id="17859"/>
<dbReference type="KEGG" id="mmu:17859"/>
<dbReference type="UCSC" id="uc008hwq.1">
    <molecule id="P50540-1"/>
    <property type="organism name" value="mouse"/>
</dbReference>
<dbReference type="AGR" id="MGI:97245"/>
<dbReference type="CTD" id="4601"/>
<dbReference type="MGI" id="MGI:97245">
    <property type="gene designation" value="Mxi1"/>
</dbReference>
<dbReference type="VEuPathDB" id="HostDB:ENSMUSG00000025025"/>
<dbReference type="eggNOG" id="KOG2483">
    <property type="taxonomic scope" value="Eukaryota"/>
</dbReference>
<dbReference type="GeneTree" id="ENSGT00940000155809"/>
<dbReference type="HOGENOM" id="CLU_082604_0_1_1"/>
<dbReference type="InParanoid" id="P50540"/>
<dbReference type="OMA" id="ECTRHTT"/>
<dbReference type="OrthoDB" id="5920083at2759"/>
<dbReference type="PhylomeDB" id="P50540"/>
<dbReference type="BioGRID-ORCS" id="17859">
    <property type="hits" value="4 hits in 80 CRISPR screens"/>
</dbReference>
<dbReference type="ChiTaRS" id="Mxi1">
    <property type="organism name" value="mouse"/>
</dbReference>
<dbReference type="PRO" id="PR:P50540"/>
<dbReference type="Proteomes" id="UP000000589">
    <property type="component" value="Chromosome 19"/>
</dbReference>
<dbReference type="RNAct" id="P50540">
    <property type="molecule type" value="protein"/>
</dbReference>
<dbReference type="Bgee" id="ENSMUSG00000025025">
    <property type="expression patterns" value="Expressed in blood and 258 other cell types or tissues"/>
</dbReference>
<dbReference type="ExpressionAtlas" id="P50540">
    <property type="expression patterns" value="baseline and differential"/>
</dbReference>
<dbReference type="GO" id="GO:0005829">
    <property type="term" value="C:cytosol"/>
    <property type="evidence" value="ECO:0007669"/>
    <property type="project" value="Ensembl"/>
</dbReference>
<dbReference type="GO" id="GO:0005730">
    <property type="term" value="C:nucleolus"/>
    <property type="evidence" value="ECO:0007669"/>
    <property type="project" value="Ensembl"/>
</dbReference>
<dbReference type="GO" id="GO:0005654">
    <property type="term" value="C:nucleoplasm"/>
    <property type="evidence" value="ECO:0007669"/>
    <property type="project" value="Ensembl"/>
</dbReference>
<dbReference type="GO" id="GO:0005634">
    <property type="term" value="C:nucleus"/>
    <property type="evidence" value="ECO:0000314"/>
    <property type="project" value="MGI"/>
</dbReference>
<dbReference type="GO" id="GO:0090575">
    <property type="term" value="C:RNA polymerase II transcription regulator complex"/>
    <property type="evidence" value="ECO:0007669"/>
    <property type="project" value="Ensembl"/>
</dbReference>
<dbReference type="GO" id="GO:0001227">
    <property type="term" value="F:DNA-binding transcription repressor activity, RNA polymerase II-specific"/>
    <property type="evidence" value="ECO:0007669"/>
    <property type="project" value="Ensembl"/>
</dbReference>
<dbReference type="GO" id="GO:0046983">
    <property type="term" value="F:protein dimerization activity"/>
    <property type="evidence" value="ECO:0007669"/>
    <property type="project" value="InterPro"/>
</dbReference>
<dbReference type="GO" id="GO:0000977">
    <property type="term" value="F:RNA polymerase II transcription regulatory region sequence-specific DNA binding"/>
    <property type="evidence" value="ECO:0007669"/>
    <property type="project" value="Ensembl"/>
</dbReference>
<dbReference type="GO" id="GO:0001825">
    <property type="term" value="P:blastocyst formation"/>
    <property type="evidence" value="ECO:0000315"/>
    <property type="project" value="MGI"/>
</dbReference>
<dbReference type="GO" id="GO:0000122">
    <property type="term" value="P:negative regulation of transcription by RNA polymerase II"/>
    <property type="evidence" value="ECO:0000314"/>
    <property type="project" value="MGI"/>
</dbReference>
<dbReference type="CDD" id="cd18930">
    <property type="entry name" value="bHLHzip_MXI1"/>
    <property type="match status" value="1"/>
</dbReference>
<dbReference type="FunFam" id="4.10.280.10:FF:000014">
    <property type="entry name" value="Max dimerization protein 1"/>
    <property type="match status" value="1"/>
</dbReference>
<dbReference type="Gene3D" id="4.10.280.10">
    <property type="entry name" value="Helix-loop-helix DNA-binding domain"/>
    <property type="match status" value="1"/>
</dbReference>
<dbReference type="InterPro" id="IPR011598">
    <property type="entry name" value="bHLH_dom"/>
</dbReference>
<dbReference type="InterPro" id="IPR036638">
    <property type="entry name" value="HLH_DNA-bd_sf"/>
</dbReference>
<dbReference type="PANTHER" id="PTHR11969">
    <property type="entry name" value="MAX DIMERIZATION, MAD"/>
    <property type="match status" value="1"/>
</dbReference>
<dbReference type="PANTHER" id="PTHR11969:SF13">
    <property type="entry name" value="MAX-INTERACTING PROTEIN 1"/>
    <property type="match status" value="1"/>
</dbReference>
<dbReference type="Pfam" id="PF00010">
    <property type="entry name" value="HLH"/>
    <property type="match status" value="1"/>
</dbReference>
<dbReference type="SMART" id="SM00353">
    <property type="entry name" value="HLH"/>
    <property type="match status" value="1"/>
</dbReference>
<dbReference type="SUPFAM" id="SSF47459">
    <property type="entry name" value="HLH, helix-loop-helix DNA-binding domain"/>
    <property type="match status" value="1"/>
</dbReference>
<dbReference type="PROSITE" id="PS50888">
    <property type="entry name" value="BHLH"/>
    <property type="match status" value="1"/>
</dbReference>
<organism>
    <name type="scientific">Mus musculus</name>
    <name type="common">Mouse</name>
    <dbReference type="NCBI Taxonomy" id="10090"/>
    <lineage>
        <taxon>Eukaryota</taxon>
        <taxon>Metazoa</taxon>
        <taxon>Chordata</taxon>
        <taxon>Craniata</taxon>
        <taxon>Vertebrata</taxon>
        <taxon>Euteleostomi</taxon>
        <taxon>Mammalia</taxon>
        <taxon>Eutheria</taxon>
        <taxon>Euarchontoglires</taxon>
        <taxon>Glires</taxon>
        <taxon>Rodentia</taxon>
        <taxon>Myomorpha</taxon>
        <taxon>Muroidea</taxon>
        <taxon>Muridae</taxon>
        <taxon>Murinae</taxon>
        <taxon>Mus</taxon>
        <taxon>Mus</taxon>
    </lineage>
</organism>
<name>MXI1_MOUSE</name>
<proteinExistence type="evidence at protein level"/>
<comment type="function">
    <text>Transcriptional repressor. MXI1 binds with MAX to form a sequence-specific DNA-binding protein complex which recognizes the core sequence 5'-CAC[GA]TG-3'. MXI1 thus antagonizes MYC transcriptional activity by competing for MAX. Isoform Short, which lacks a segment, has a much stronger suppressive potential and associates with a SIN3 homologous protein.</text>
</comment>
<comment type="subunit">
    <text evidence="3 5">Efficient DNA binding requires dimerization with another bHLH protein. Binds DNA as a heterodimer with MAX. Interacts with SMC3. Interacts with RNF17.</text>
</comment>
<comment type="subcellular location">
    <subcellularLocation>
        <location>Nucleus</location>
    </subcellularLocation>
</comment>
<comment type="alternative products">
    <event type="alternative splicing"/>
    <isoform>
        <id>P50540-1</id>
        <name>Long</name>
        <sequence type="displayed"/>
    </isoform>
    <isoform>
        <id>P50540-2</id>
        <name>Short</name>
        <sequence type="described" ref="VSP_002141"/>
    </isoform>
</comment>
<comment type="developmental stage">
    <text evidence="4">Primarily expressed in differentiating cells. Also expressed in the proliferating cells of the developing CNS and the epidermis. In the spinal cord at embryonic day 10.5, expressed in the ventricular zone of the neural tube. Expressed at highest levels in cells accumulating in the intermediate zone. At 11.5 and 12.5 dpc, highly expressed in the intermediate zone and at reduced levels in the ventricular zone that mostly persists in the dorsal part of the neural tube. At 14.5 dpc, expressed throughout the spinal cord. In the developing epidermis at 14.5 dpc, found in the dorsal lateral epidermis. At 17 dpc, expression is restricted not only to the differentiating cells of the epidermis but also to the proliferating cell compartment and expression extends into the first differentiating cell layers, but decreases in the uppermost layers of the epidermis.</text>
</comment>
<keyword id="KW-0025">Alternative splicing</keyword>
<keyword id="KW-0238">DNA-binding</keyword>
<keyword id="KW-0539">Nucleus</keyword>
<keyword id="KW-1185">Reference proteome</keyword>
<keyword id="KW-0678">Repressor</keyword>
<keyword id="KW-0804">Transcription</keyword>
<keyword id="KW-0805">Transcription regulation</keyword>
<accession>P50540</accession>
<sequence length="228" mass="25978">MERVRMINVQRLLEAAEFLERRERECEHGYASSFPSMPSPRLQHSKPPRRLSRAQKHSSGSSNTSTANRSTHNELEKNRRAHLRLCLERLKVLIPLGPDCTRHTTLGLLNKAKAHIKKLEEAERKSQHQLENLEREQRFLKRRLEQLQGPQEMERIRMDSIGSTISSDRSDSEREEIEVDVESTEFSHGEADSVSTTSISDLDDHSSLQSVGSDEGYSSASVKLSFAS</sequence>